<sequence length="572" mass="62294">MSYQGKKNIPRITSDRLLIKGGKIVNDDQSFYADIYMEDGLIKQIGENLIVPGGVKTIEAHSRMVIPGGIDVHTRFQMPDQGMTSADDFFQGTKAALAGGTTMIIDHVVPEPGTSLLAAFDQWREWADSKSCCDYSLHVDISEWHKGIQEEMEALVKDHGVNSFLVYMAFKDRFQLTDCQIYEVLSVIRDIGAIAQVHAENGDIIAEEQQRILDLGITGPEGHVLSRPEEVEAEAVNRAITIANQTNCPLYITKVMSKSSAEVIAQARKKGTVVYGEPITASLGTDGSHYWSKNWAKAAAFVTSPPLSPDPTTPDFLNSLLSCGDLQVTGSAHCTFNTAQKAVGKDNFTLIPEGTNGTEERMSVIWDKAVVTGKMDENQFVAVTSTNAAKVFNLYPRKGRIAVGSDADLVIWDPDSVKTISAKTHNSSLEYNIFEGMECRGSPLVVISQGKIVLEDGTLHVTEGSGRYIPRKPFPDFVYKRIKARSRLAELRGVPRGLYDGPVCEVSVTPKTVTPASSAKTSPAKQQAPPVRNLHQSGFSLSGAQIDDNIPRRTTQRIVAPPGGRANITSLG</sequence>
<accession>Q5R9Y6</accession>
<keyword id="KW-0963">Cytoplasm</keyword>
<keyword id="KW-0206">Cytoskeleton</keyword>
<keyword id="KW-0217">Developmental protein</keyword>
<keyword id="KW-0221">Differentiation</keyword>
<keyword id="KW-0472">Membrane</keyword>
<keyword id="KW-0488">Methylation</keyword>
<keyword id="KW-0524">Neurogenesis</keyword>
<keyword id="KW-0597">Phosphoprotein</keyword>
<keyword id="KW-1185">Reference proteome</keyword>
<keyword id="KW-0702">S-nitrosylation</keyword>
<dbReference type="EMBL" id="CR859244">
    <property type="protein sequence ID" value="CAH91424.1"/>
    <property type="molecule type" value="mRNA"/>
</dbReference>
<dbReference type="RefSeq" id="NP_001125834.1">
    <property type="nucleotide sequence ID" value="NM_001132362.1"/>
</dbReference>
<dbReference type="SMR" id="Q5R9Y6"/>
<dbReference type="FunCoup" id="Q5R9Y6">
    <property type="interactions" value="1349"/>
</dbReference>
<dbReference type="STRING" id="9601.ENSPPYP00000020686"/>
<dbReference type="MEROPS" id="M38.975"/>
<dbReference type="Ensembl" id="ENSPPYT00000021515.2">
    <property type="protein sequence ID" value="ENSPPYP00000020686.1"/>
    <property type="gene ID" value="ENSPPYG00000018458.2"/>
</dbReference>
<dbReference type="GeneID" id="100172763"/>
<dbReference type="KEGG" id="pon:100172763"/>
<dbReference type="CTD" id="1808"/>
<dbReference type="eggNOG" id="KOG2584">
    <property type="taxonomic scope" value="Eukaryota"/>
</dbReference>
<dbReference type="GeneTree" id="ENSGT01030000234527"/>
<dbReference type="HOGENOM" id="CLU_015572_2_2_1"/>
<dbReference type="InParanoid" id="Q5R9Y6"/>
<dbReference type="OrthoDB" id="10258955at2759"/>
<dbReference type="TreeFam" id="TF314706"/>
<dbReference type="Proteomes" id="UP000001595">
    <property type="component" value="Chromosome 8"/>
</dbReference>
<dbReference type="GO" id="GO:0005856">
    <property type="term" value="C:cytoskeleton"/>
    <property type="evidence" value="ECO:0007669"/>
    <property type="project" value="UniProtKB-SubCell"/>
</dbReference>
<dbReference type="GO" id="GO:0005829">
    <property type="term" value="C:cytosol"/>
    <property type="evidence" value="ECO:0000250"/>
    <property type="project" value="UniProtKB"/>
</dbReference>
<dbReference type="GO" id="GO:0016020">
    <property type="term" value="C:membrane"/>
    <property type="evidence" value="ECO:0007669"/>
    <property type="project" value="UniProtKB-SubCell"/>
</dbReference>
<dbReference type="GO" id="GO:0016812">
    <property type="term" value="F:hydrolase activity, acting on carbon-nitrogen (but not peptide) bonds, in cyclic amides"/>
    <property type="evidence" value="ECO:0007669"/>
    <property type="project" value="TreeGrafter"/>
</dbReference>
<dbReference type="GO" id="GO:0030154">
    <property type="term" value="P:cell differentiation"/>
    <property type="evidence" value="ECO:0007669"/>
    <property type="project" value="UniProtKB-KW"/>
</dbReference>
<dbReference type="GO" id="GO:0007010">
    <property type="term" value="P:cytoskeleton organization"/>
    <property type="evidence" value="ECO:0000250"/>
    <property type="project" value="UniProtKB"/>
</dbReference>
<dbReference type="GO" id="GO:0006897">
    <property type="term" value="P:endocytosis"/>
    <property type="evidence" value="ECO:0000250"/>
    <property type="project" value="UniProtKB"/>
</dbReference>
<dbReference type="GO" id="GO:0007399">
    <property type="term" value="P:nervous system development"/>
    <property type="evidence" value="ECO:0007669"/>
    <property type="project" value="UniProtKB-KW"/>
</dbReference>
<dbReference type="CDD" id="cd01314">
    <property type="entry name" value="D-HYD"/>
    <property type="match status" value="1"/>
</dbReference>
<dbReference type="FunFam" id="2.30.40.10:FF:000021">
    <property type="entry name" value="Dihydropyrimidinase-related protein 2"/>
    <property type="match status" value="1"/>
</dbReference>
<dbReference type="FunFam" id="2.30.40.10:FF:000022">
    <property type="entry name" value="Dihydropyrimidinase-related protein 2"/>
    <property type="match status" value="1"/>
</dbReference>
<dbReference type="FunFam" id="3.20.20.140:FF:000174">
    <property type="entry name" value="Dihydropyrimidinase-related protein 2"/>
    <property type="match status" value="1"/>
</dbReference>
<dbReference type="Gene3D" id="3.20.20.140">
    <property type="entry name" value="Metal-dependent hydrolases"/>
    <property type="match status" value="1"/>
</dbReference>
<dbReference type="Gene3D" id="2.30.40.10">
    <property type="entry name" value="Urease, subunit C, domain 1"/>
    <property type="match status" value="1"/>
</dbReference>
<dbReference type="InterPro" id="IPR006680">
    <property type="entry name" value="Amidohydro-rel"/>
</dbReference>
<dbReference type="InterPro" id="IPR011778">
    <property type="entry name" value="Hydantoinase/dihydroPyrase"/>
</dbReference>
<dbReference type="InterPro" id="IPR011059">
    <property type="entry name" value="Metal-dep_hydrolase_composite"/>
</dbReference>
<dbReference type="InterPro" id="IPR032466">
    <property type="entry name" value="Metal_Hydrolase"/>
</dbReference>
<dbReference type="InterPro" id="IPR050378">
    <property type="entry name" value="Metallo-dep_Hydrolases_sf"/>
</dbReference>
<dbReference type="NCBIfam" id="TIGR02033">
    <property type="entry name" value="D-hydantoinase"/>
    <property type="match status" value="1"/>
</dbReference>
<dbReference type="PANTHER" id="PTHR11647:SF56">
    <property type="entry name" value="DIHYDROPYRIMIDINASE-RELATED PROTEIN 2"/>
    <property type="match status" value="1"/>
</dbReference>
<dbReference type="PANTHER" id="PTHR11647">
    <property type="entry name" value="HYDRANTOINASE/DIHYDROPYRIMIDINASE FAMILY MEMBER"/>
    <property type="match status" value="1"/>
</dbReference>
<dbReference type="Pfam" id="PF01979">
    <property type="entry name" value="Amidohydro_1"/>
    <property type="match status" value="1"/>
</dbReference>
<dbReference type="SUPFAM" id="SSF51338">
    <property type="entry name" value="Composite domain of metallo-dependent hydrolases"/>
    <property type="match status" value="2"/>
</dbReference>
<dbReference type="SUPFAM" id="SSF51556">
    <property type="entry name" value="Metallo-dependent hydrolases"/>
    <property type="match status" value="1"/>
</dbReference>
<protein>
    <recommendedName>
        <fullName>Dihydropyrimidinase-related protein 2</fullName>
        <shortName>DRP-2</shortName>
    </recommendedName>
</protein>
<comment type="function">
    <text evidence="1">Plays a role in neuronal development and polarity, as well as in axon growth and guidance, neuronal growth cone collapse and cell migration. Necessary for signaling by class 3 semaphorins and subsequent remodeling of the cytoskeleton. May play a role in endocytosis (By similarity).</text>
</comment>
<comment type="subunit">
    <text evidence="1">Homotetramer, and heterotetramer with CRMP1, DPYSL3, DPYSL4 or DPYSL5. Interacts through its C-terminus with the C-terminus of CYFIP1/SRA1. Interacts with HTR4. Interacts with CLN6. Interacts with MICALL1 (By similarity).</text>
</comment>
<comment type="subcellular location">
    <subcellularLocation>
        <location evidence="1">Cytoplasm</location>
        <location evidence="1">Cytosol</location>
    </subcellularLocation>
    <subcellularLocation>
        <location evidence="1">Cytoplasm</location>
        <location evidence="1">Cytoskeleton</location>
    </subcellularLocation>
    <subcellularLocation>
        <location evidence="1">Membrane</location>
    </subcellularLocation>
    <text evidence="1">Tightly but non-covalently associated with membranes.</text>
</comment>
<comment type="PTM">
    <text evidence="1">Phosphorylation by DYRK2 at Ser-522 is required for subsequent phosphorylation by GSK3B. Phosphorylation at Thr-514 by GSK3B abolishes tubulin-binding leading to destabilization of microtubule assembly in axons and neurodegeneration (By similarity).</text>
</comment>
<comment type="similarity">
    <text evidence="7">Belongs to the metallo-dependent hydrolases superfamily. Hydantoinase/dihydropyrimidinase family.</text>
</comment>
<comment type="caution">
    <text evidence="7">Lacks most of the conserved residues that are essential for binding the metal cofactor and hence for dihydropyrimidinase activity. Its enzyme activity is therefore unsure.</text>
</comment>
<reference key="1">
    <citation type="submission" date="2004-11" db="EMBL/GenBank/DDBJ databases">
        <authorList>
            <consortium name="The German cDNA consortium"/>
        </authorList>
    </citation>
    <scope>NUCLEOTIDE SEQUENCE [LARGE SCALE MRNA]</scope>
    <source>
        <tissue>Heart</tissue>
    </source>
</reference>
<organism>
    <name type="scientific">Pongo abelii</name>
    <name type="common">Sumatran orangutan</name>
    <name type="synonym">Pongo pygmaeus abelii</name>
    <dbReference type="NCBI Taxonomy" id="9601"/>
    <lineage>
        <taxon>Eukaryota</taxon>
        <taxon>Metazoa</taxon>
        <taxon>Chordata</taxon>
        <taxon>Craniata</taxon>
        <taxon>Vertebrata</taxon>
        <taxon>Euteleostomi</taxon>
        <taxon>Mammalia</taxon>
        <taxon>Eutheria</taxon>
        <taxon>Euarchontoglires</taxon>
        <taxon>Primates</taxon>
        <taxon>Haplorrhini</taxon>
        <taxon>Catarrhini</taxon>
        <taxon>Hominidae</taxon>
        <taxon>Pongo</taxon>
    </lineage>
</organism>
<name>DPYL2_PONAB</name>
<gene>
    <name type="primary">DPYSL2</name>
</gene>
<feature type="chain" id="PRO_0000284994" description="Dihydropyrimidinase-related protein 2">
    <location>
        <begin position="1"/>
        <end position="572"/>
    </location>
</feature>
<feature type="region of interest" description="Disordered" evidence="6">
    <location>
        <begin position="512"/>
        <end position="537"/>
    </location>
</feature>
<feature type="compositionally biased region" description="Polar residues" evidence="6">
    <location>
        <begin position="512"/>
        <end position="525"/>
    </location>
</feature>
<feature type="modified residue" description="Phosphotyrosine; by FYN" evidence="5">
    <location>
        <position position="32"/>
    </location>
</feature>
<feature type="modified residue" description="N6-succinyllysine" evidence="3">
    <location>
        <position position="258"/>
    </location>
</feature>
<feature type="modified residue" description="Phosphoserine" evidence="4">
    <location>
        <position position="259"/>
    </location>
</feature>
<feature type="modified residue" description="Phosphotyrosine" evidence="3">
    <location>
        <position position="431"/>
    </location>
</feature>
<feature type="modified residue" description="Phosphoserine" evidence="3">
    <location>
        <position position="465"/>
    </location>
</feature>
<feature type="modified residue" description="Phosphotyrosine" evidence="3">
    <location>
        <position position="499"/>
    </location>
</feature>
<feature type="modified residue" description="S-nitrosocysteine" evidence="4">
    <location>
        <position position="504"/>
    </location>
</feature>
<feature type="modified residue" description="Phosphoserine" evidence="3">
    <location>
        <position position="507"/>
    </location>
</feature>
<feature type="modified residue" description="Phosphothreonine" evidence="5">
    <location>
        <position position="509"/>
    </location>
</feature>
<feature type="modified residue" description="Phosphothreonine" evidence="3">
    <location>
        <position position="512"/>
    </location>
</feature>
<feature type="modified residue" description="Phosphothreonine; by GSK3-beta" evidence="5">
    <location>
        <position position="514"/>
    </location>
</feature>
<feature type="modified residue" description="Phosphoserine" evidence="5">
    <location>
        <position position="517"/>
    </location>
</feature>
<feature type="modified residue" description="Phosphoserine" evidence="5">
    <location>
        <position position="518"/>
    </location>
</feature>
<feature type="modified residue" description="Phosphothreonine" evidence="3">
    <location>
        <position position="521"/>
    </location>
</feature>
<feature type="modified residue" description="Phosphoserine; by DYRK2" evidence="5">
    <location>
        <position position="522"/>
    </location>
</feature>
<feature type="modified residue" description="Phosphoserine" evidence="3">
    <location>
        <position position="537"/>
    </location>
</feature>
<feature type="modified residue" description="Phosphoserine" evidence="3">
    <location>
        <position position="540"/>
    </location>
</feature>
<feature type="modified residue" description="Phosphoserine" evidence="3">
    <location>
        <position position="542"/>
    </location>
</feature>
<feature type="modified residue" description="Phosphothreonine; by ROCK2" evidence="2">
    <location>
        <position position="555"/>
    </location>
</feature>
<feature type="modified residue" description="Asymmetric dimethylarginine" evidence="3">
    <location>
        <position position="565"/>
    </location>
</feature>
<proteinExistence type="evidence at transcript level"/>
<evidence type="ECO:0000250" key="1"/>
<evidence type="ECO:0000250" key="2">
    <source>
        <dbReference type="UniProtKB" id="O02675"/>
    </source>
</evidence>
<evidence type="ECO:0000250" key="3">
    <source>
        <dbReference type="UniProtKB" id="O08553"/>
    </source>
</evidence>
<evidence type="ECO:0000250" key="4">
    <source>
        <dbReference type="UniProtKB" id="P47942"/>
    </source>
</evidence>
<evidence type="ECO:0000250" key="5">
    <source>
        <dbReference type="UniProtKB" id="Q16555"/>
    </source>
</evidence>
<evidence type="ECO:0000256" key="6">
    <source>
        <dbReference type="SAM" id="MobiDB-lite"/>
    </source>
</evidence>
<evidence type="ECO:0000305" key="7"/>